<proteinExistence type="inferred from homology"/>
<comment type="function">
    <text evidence="1">Acts as a suppressor of RNA-mediated gene silencing, also known as post-transcriptional gene silencing (PTGS), a mechanism of plant viral defense that limits the accumulation of viral RNAs.</text>
</comment>
<comment type="similarity">
    <text evidence="3">Belongs to the tymoviridae protein p69 family.</text>
</comment>
<evidence type="ECO:0000250" key="1"/>
<evidence type="ECO:0000256" key="2">
    <source>
        <dbReference type="SAM" id="MobiDB-lite"/>
    </source>
</evidence>
<evidence type="ECO:0000305" key="3"/>
<organism>
    <name type="scientific">Turnip yellow mosaic virus (isolate Australia)</name>
    <dbReference type="NCBI Taxonomy" id="12155"/>
    <lineage>
        <taxon>Viruses</taxon>
        <taxon>Riboviria</taxon>
        <taxon>Orthornavirae</taxon>
        <taxon>Kitrinoviricota</taxon>
        <taxon>Alsuviricetes</taxon>
        <taxon>Tymovirales</taxon>
        <taxon>Tymoviridae</taxon>
        <taxon>Tymovirus</taxon>
        <taxon>Tymovirus brassicae</taxon>
    </lineage>
</organism>
<reference key="1">
    <citation type="journal article" date="1989" name="Virology">
        <title>Nucleotide sequence of the genome of an Australian isolate of turnip yellow mosaic tymovirus.</title>
        <authorList>
            <person name="Keese P."/>
            <person name="Mackenzie A."/>
            <person name="Gibbs A."/>
        </authorList>
    </citation>
    <scope>NUCLEOTIDE SEQUENCE [GENOMIC RNA]</scope>
</reference>
<sequence>MSNGLPISIGRPCTHDSQRSLSASDSRIHSRFDSLLDTDLPMVHSEGTSAPTQLLRHPNIWFGNIPPPPRRPQDNRDFSPLHPLVFPGHHSQLRHVHETQQVQQTCPGELKLSGIEELPPAPQRQHSLPLHITRPSRFPHHFHARRPDVLPSLPDHGPVLAETKPRTSVRQPRSTTRGPSFRPILLPEVVHVHDDPPHSSLRPGRSRSRQLQPTIRRPLLAPNQFNSPRQPPPLSDDPGILGPCPLAPNSTRDPPPRPITPGPFNTHGVRPLSVLPRAPPRRGLLPNPRRHRTSTGHIPSTTASRPTGPPSRLQRPVHLHQSGPHTPDFRPSGIRKDAFLQTGPRLGHLERLGQSADLRTSERTPSTKRRLPRPSEPNCLPSSLPEATLAPSYRHRRSHPLLPNPPAALPPIAYTSGRGKIHHSLPKGALPKEGPPPPPRRLPSPATPPQSPLRDLGRTPSFPTPPKTSTRAPESCIAAPPTDIAPLDSDPVLSVRTEVHAPERRTFMDPEALRAALAGLPSPPLSVGIIRTASQTVLPTNSPSPTRHLPPTSSPWILQSPVGEDAIVDSEDDSISSFHSHDFNSPSGPLRSQSPSRFRLHLRSPSTSSGIEPWSPASYDYGSAPDTD</sequence>
<feature type="chain" id="PRO_0000222944" description="69 kDa protein">
    <location>
        <begin position="1"/>
        <end position="628"/>
    </location>
</feature>
<feature type="region of interest" description="Disordered" evidence="2">
    <location>
        <begin position="1"/>
        <end position="24"/>
    </location>
</feature>
<feature type="region of interest" description="Disordered" evidence="2">
    <location>
        <begin position="141"/>
        <end position="492"/>
    </location>
</feature>
<feature type="region of interest" description="Disordered" evidence="2">
    <location>
        <begin position="537"/>
        <end position="628"/>
    </location>
</feature>
<feature type="compositionally biased region" description="Polar residues" evidence="2">
    <location>
        <begin position="166"/>
        <end position="178"/>
    </location>
</feature>
<feature type="compositionally biased region" description="Polar residues" evidence="2">
    <location>
        <begin position="295"/>
        <end position="305"/>
    </location>
</feature>
<feature type="compositionally biased region" description="Pro residues" evidence="2">
    <location>
        <begin position="433"/>
        <end position="451"/>
    </location>
</feature>
<feature type="compositionally biased region" description="Polar residues" evidence="2">
    <location>
        <begin position="586"/>
        <end position="596"/>
    </location>
</feature>
<keyword id="KW-0945">Host-virus interaction</keyword>
<keyword id="KW-1090">Inhibition of host innate immune response by virus</keyword>
<keyword id="KW-0941">Suppressor of RNA silencing</keyword>
<keyword id="KW-0899">Viral immunoevasion</keyword>
<protein>
    <recommendedName>
        <fullName>69 kDa protein</fullName>
    </recommendedName>
    <alternativeName>
        <fullName>p69</fullName>
    </alternativeName>
</protein>
<dbReference type="EMBL" id="J04373">
    <property type="protein sequence ID" value="AAA46591.1"/>
    <property type="molecule type" value="Genomic_RNA"/>
</dbReference>
<dbReference type="PIR" id="JQ0110">
    <property type="entry name" value="JQ0110"/>
</dbReference>
<dbReference type="Proteomes" id="UP000008268">
    <property type="component" value="Genome"/>
</dbReference>
<dbReference type="GO" id="GO:0052170">
    <property type="term" value="P:symbiont-mediated suppression of host innate immune response"/>
    <property type="evidence" value="ECO:0007669"/>
    <property type="project" value="UniProtKB-KW"/>
</dbReference>
<dbReference type="InterPro" id="IPR004935">
    <property type="entry name" value="45/70kDa_tymovirus"/>
</dbReference>
<dbReference type="Pfam" id="PF03251">
    <property type="entry name" value="Tymo_45kd_70kd"/>
    <property type="match status" value="1"/>
</dbReference>
<name>P69_TYMVA</name>
<accession>P20131</accession>
<organismHost>
    <name type="scientific">Brassica</name>
    <dbReference type="NCBI Taxonomy" id="3705"/>
</organismHost>
<organismHost>
    <name type="scientific">Cardamine lilacina</name>
    <dbReference type="NCBI Taxonomy" id="82359"/>
</organismHost>